<sequence>MANVTLFDQTGKEAGQVVLSDAVFGIEPNESVVFDVIISQRASLRQGTHAVKNRSAVSGGGRKPWRQKGTGRARQGSIRSPQWRGGGVVFGPTPRSYGYKLPQKVRRLALKSVYSEKVAENKFVAVDALSFTAPKTAEFAKVLAALSIDSKVLVILEEGNEFAALSARNLPNVKVATATTASVLDIANSDKLLVTQAAISKIEEVLA</sequence>
<comment type="function">
    <text evidence="1">One of the primary rRNA binding proteins, this protein initially binds near the 5'-end of the 23S rRNA. It is important during the early stages of 50S assembly. It makes multiple contacts with different domains of the 23S rRNA in the assembled 50S subunit and ribosome (By similarity).</text>
</comment>
<comment type="function">
    <text evidence="1">Forms part of the polypeptide exit tunnel.</text>
</comment>
<comment type="subunit">
    <text evidence="1">Part of the 50S ribosomal subunit.</text>
</comment>
<comment type="similarity">
    <text evidence="5">Belongs to the universal ribosomal protein uL4 family.</text>
</comment>
<gene>
    <name type="primary">rplD</name>
    <name type="ordered locus">SP_0210</name>
</gene>
<organism>
    <name type="scientific">Streptococcus pneumoniae serotype 4 (strain ATCC BAA-334 / TIGR4)</name>
    <dbReference type="NCBI Taxonomy" id="170187"/>
    <lineage>
        <taxon>Bacteria</taxon>
        <taxon>Bacillati</taxon>
        <taxon>Bacillota</taxon>
        <taxon>Bacilli</taxon>
        <taxon>Lactobacillales</taxon>
        <taxon>Streptococcaceae</taxon>
        <taxon>Streptococcus</taxon>
    </lineage>
</organism>
<keyword id="KW-0046">Antibiotic resistance</keyword>
<keyword id="KW-1185">Reference proteome</keyword>
<keyword id="KW-0687">Ribonucleoprotein</keyword>
<keyword id="KW-0689">Ribosomal protein</keyword>
<keyword id="KW-0694">RNA-binding</keyword>
<keyword id="KW-0699">rRNA-binding</keyword>
<protein>
    <recommendedName>
        <fullName evidence="5">Large ribosomal subunit protein uL4</fullName>
    </recommendedName>
    <alternativeName>
        <fullName>50S ribosomal protein L4</fullName>
    </alternativeName>
</protein>
<feature type="chain" id="PRO_0000129288" description="Large ribosomal subunit protein uL4">
    <location>
        <begin position="1"/>
        <end position="207"/>
    </location>
</feature>
<feature type="region of interest" description="Disordered" evidence="2">
    <location>
        <begin position="49"/>
        <end position="78"/>
    </location>
</feature>
<feature type="sequence variant" description="In strain: 5Az; confers macrolide resistance. Grows slowly at 35 degrees Celsius and dies at 25 degrees Celsius." evidence="3">
    <original>Q</original>
    <variation>QSQ</variation>
    <location>
        <position position="67"/>
    </location>
</feature>
<feature type="sequence variant" description="In 12 Bulgarian and 4 Slovakian strains; confers high resistance to erythromycin, azithromycin and josamycin and lower resistance to clarithromycin and penicillin G." evidence="4">
    <original>GTG</original>
    <variation>TPS</variation>
    <location>
        <begin position="69"/>
        <end position="71"/>
    </location>
</feature>
<feature type="sequence variant" description="In strain: 4Az; confers macrolide resistance." evidence="3">
    <original>G</original>
    <variation>C</variation>
    <location>
        <position position="69"/>
    </location>
</feature>
<feature type="sequence variant" description="In strain: BM4418; confers moderate resistance to macrolides and high resistance to the ketolide telithromycin. Grows slowly." evidence="4">
    <original>G</original>
    <variation>GRQKGTG</variation>
    <location>
        <position position="71"/>
    </location>
</feature>
<proteinExistence type="inferred from homology"/>
<dbReference type="EMBL" id="AE005672">
    <property type="protein sequence ID" value="AAK74390.1"/>
    <property type="molecule type" value="Genomic_DNA"/>
</dbReference>
<dbReference type="PIR" id="E95024">
    <property type="entry name" value="E95024"/>
</dbReference>
<dbReference type="PIR" id="E97895">
    <property type="entry name" value="E97895"/>
</dbReference>
<dbReference type="RefSeq" id="WP_000024543.1">
    <property type="nucleotide sequence ID" value="NZ_CP155539.1"/>
</dbReference>
<dbReference type="SMR" id="Q97SV4"/>
<dbReference type="PaxDb" id="170187-SP_0210"/>
<dbReference type="EnsemblBacteria" id="AAK74390">
    <property type="protein sequence ID" value="AAK74390"/>
    <property type="gene ID" value="SP_0210"/>
</dbReference>
<dbReference type="GeneID" id="45652308"/>
<dbReference type="KEGG" id="spn:SP_0210"/>
<dbReference type="eggNOG" id="COG0088">
    <property type="taxonomic scope" value="Bacteria"/>
</dbReference>
<dbReference type="PhylomeDB" id="Q97SV4"/>
<dbReference type="BioCyc" id="SPNE170187:G1FZB-215-MONOMER"/>
<dbReference type="Proteomes" id="UP000000585">
    <property type="component" value="Chromosome"/>
</dbReference>
<dbReference type="GO" id="GO:1990904">
    <property type="term" value="C:ribonucleoprotein complex"/>
    <property type="evidence" value="ECO:0007669"/>
    <property type="project" value="UniProtKB-KW"/>
</dbReference>
<dbReference type="GO" id="GO:0005840">
    <property type="term" value="C:ribosome"/>
    <property type="evidence" value="ECO:0007669"/>
    <property type="project" value="UniProtKB-KW"/>
</dbReference>
<dbReference type="GO" id="GO:0019843">
    <property type="term" value="F:rRNA binding"/>
    <property type="evidence" value="ECO:0007669"/>
    <property type="project" value="UniProtKB-UniRule"/>
</dbReference>
<dbReference type="GO" id="GO:0003735">
    <property type="term" value="F:structural constituent of ribosome"/>
    <property type="evidence" value="ECO:0007669"/>
    <property type="project" value="InterPro"/>
</dbReference>
<dbReference type="GO" id="GO:0046677">
    <property type="term" value="P:response to antibiotic"/>
    <property type="evidence" value="ECO:0007669"/>
    <property type="project" value="UniProtKB-KW"/>
</dbReference>
<dbReference type="GO" id="GO:0006412">
    <property type="term" value="P:translation"/>
    <property type="evidence" value="ECO:0007669"/>
    <property type="project" value="UniProtKB-UniRule"/>
</dbReference>
<dbReference type="FunFam" id="3.40.1370.10:FF:000003">
    <property type="entry name" value="50S ribosomal protein L4"/>
    <property type="match status" value="1"/>
</dbReference>
<dbReference type="Gene3D" id="3.40.1370.10">
    <property type="match status" value="1"/>
</dbReference>
<dbReference type="HAMAP" id="MF_01328_B">
    <property type="entry name" value="Ribosomal_uL4_B"/>
    <property type="match status" value="1"/>
</dbReference>
<dbReference type="InterPro" id="IPR002136">
    <property type="entry name" value="Ribosomal_uL4"/>
</dbReference>
<dbReference type="InterPro" id="IPR013005">
    <property type="entry name" value="Ribosomal_uL4-like"/>
</dbReference>
<dbReference type="InterPro" id="IPR023574">
    <property type="entry name" value="Ribosomal_uL4_dom_sf"/>
</dbReference>
<dbReference type="NCBIfam" id="TIGR03953">
    <property type="entry name" value="rplD_bact"/>
    <property type="match status" value="1"/>
</dbReference>
<dbReference type="PANTHER" id="PTHR10746">
    <property type="entry name" value="50S RIBOSOMAL PROTEIN L4"/>
    <property type="match status" value="1"/>
</dbReference>
<dbReference type="PANTHER" id="PTHR10746:SF6">
    <property type="entry name" value="LARGE RIBOSOMAL SUBUNIT PROTEIN UL4M"/>
    <property type="match status" value="1"/>
</dbReference>
<dbReference type="Pfam" id="PF00573">
    <property type="entry name" value="Ribosomal_L4"/>
    <property type="match status" value="1"/>
</dbReference>
<dbReference type="SUPFAM" id="SSF52166">
    <property type="entry name" value="Ribosomal protein L4"/>
    <property type="match status" value="1"/>
</dbReference>
<reference key="1">
    <citation type="journal article" date="2001" name="Science">
        <title>Complete genome sequence of a virulent isolate of Streptococcus pneumoniae.</title>
        <authorList>
            <person name="Tettelin H."/>
            <person name="Nelson K.E."/>
            <person name="Paulsen I.T."/>
            <person name="Eisen J.A."/>
            <person name="Read T.D."/>
            <person name="Peterson S.N."/>
            <person name="Heidelberg J.F."/>
            <person name="DeBoy R.T."/>
            <person name="Haft D.H."/>
            <person name="Dodson R.J."/>
            <person name="Durkin A.S."/>
            <person name="Gwinn M.L."/>
            <person name="Kolonay J.F."/>
            <person name="Nelson W.C."/>
            <person name="Peterson J.D."/>
            <person name="Umayam L.A."/>
            <person name="White O."/>
            <person name="Salzberg S.L."/>
            <person name="Lewis M.R."/>
            <person name="Radune D."/>
            <person name="Holtzapple E.K."/>
            <person name="Khouri H.M."/>
            <person name="Wolf A.M."/>
            <person name="Utterback T.R."/>
            <person name="Hansen C.L."/>
            <person name="McDonald L.A."/>
            <person name="Feldblyum T.V."/>
            <person name="Angiuoli S.V."/>
            <person name="Dickinson T."/>
            <person name="Hickey E.K."/>
            <person name="Holt I.E."/>
            <person name="Loftus B.J."/>
            <person name="Yang F."/>
            <person name="Smith H.O."/>
            <person name="Venter J.C."/>
            <person name="Dougherty B.A."/>
            <person name="Morrison D.A."/>
            <person name="Hollingshead S.K."/>
            <person name="Fraser C.M."/>
        </authorList>
    </citation>
    <scope>NUCLEOTIDE SEQUENCE [LARGE SCALE GENOMIC DNA]</scope>
    <source>
        <strain>ATCC BAA-334 / TIGR4</strain>
    </source>
</reference>
<reference key="2">
    <citation type="journal article" date="2000" name="Antimicrob. Agents Chemother.">
        <title>Mutations in 23S rRNA and ribosomal protein L4 account for resistance in pneumococcal strains selected in vitro by macrolide passage.</title>
        <authorList>
            <person name="Tait-Kamradt A."/>
            <person name="Davies T."/>
            <person name="Cronan M."/>
            <person name="Jacobs M.R."/>
            <person name="Appelbaum P.C."/>
            <person name="Sutcliffe J."/>
        </authorList>
    </citation>
    <scope>VARIANTS SER-GLN-67 INS AND CYS-69</scope>
    <source>
        <strain>4Az</strain>
        <strain>5Az</strain>
    </source>
</reference>
<reference key="3">
    <citation type="journal article" date="2000" name="Antimicrob. Agents Chemother.">
        <title>Two new mechanisms of macrolide resistance in clinical strains of Streptococcus pneumoniae from Eastern Europe and North America.</title>
        <authorList>
            <person name="Tait-Kamradt A."/>
            <person name="Davies T."/>
            <person name="Appelbaum P.C."/>
            <person name="Depardieu F."/>
            <person name="Courvalin P."/>
            <person name="Petitpas J."/>
            <person name="Wondrack L."/>
            <person name="Walker A."/>
            <person name="Jacobs M.R."/>
            <person name="Sutcliffe J."/>
        </authorList>
    </citation>
    <scope>MACROLIDE AND PENICILLIN G RESISTANT STRAINS</scope>
    <source>
        <strain>16 East European strains</strain>
        <strain>Canadian strain BM4418</strain>
    </source>
</reference>
<accession>Q97SV4</accession>
<name>RL4_STRPN</name>
<evidence type="ECO:0000250" key="1"/>
<evidence type="ECO:0000256" key="2">
    <source>
        <dbReference type="SAM" id="MobiDB-lite"/>
    </source>
</evidence>
<evidence type="ECO:0000269" key="3">
    <source>
    </source>
</evidence>
<evidence type="ECO:0000269" key="4">
    <source>
    </source>
</evidence>
<evidence type="ECO:0000305" key="5"/>